<organism>
    <name type="scientific">Dictyostelium discoideum</name>
    <name type="common">Social amoeba</name>
    <dbReference type="NCBI Taxonomy" id="44689"/>
    <lineage>
        <taxon>Eukaryota</taxon>
        <taxon>Amoebozoa</taxon>
        <taxon>Evosea</taxon>
        <taxon>Eumycetozoa</taxon>
        <taxon>Dictyostelia</taxon>
        <taxon>Dictyosteliales</taxon>
        <taxon>Dictyosteliaceae</taxon>
        <taxon>Dictyostelium</taxon>
    </lineage>
</organism>
<keyword id="KW-0496">Mitochondrion</keyword>
<keyword id="KW-1185">Reference proteome</keyword>
<keyword id="KW-0809">Transit peptide</keyword>
<gene>
    <name type="primary">gcvH5</name>
    <name type="synonym">gcvH</name>
    <name type="ORF">DDB_G0287861</name>
</gene>
<dbReference type="EMBL" id="AAFI02000104">
    <property type="protein sequence ID" value="EAL63577.1"/>
    <property type="molecule type" value="Genomic_DNA"/>
</dbReference>
<dbReference type="RefSeq" id="XP_637062.1">
    <property type="nucleotide sequence ID" value="XM_631970.1"/>
</dbReference>
<dbReference type="SMR" id="Q54JU0"/>
<dbReference type="FunCoup" id="Q54JU0">
    <property type="interactions" value="12"/>
</dbReference>
<dbReference type="STRING" id="44689.Q54JU0"/>
<dbReference type="PaxDb" id="44689-DDB0231215"/>
<dbReference type="EnsemblProtists" id="EAL63577">
    <property type="protein sequence ID" value="EAL63577"/>
    <property type="gene ID" value="DDB_G0287861"/>
</dbReference>
<dbReference type="GeneID" id="8626316"/>
<dbReference type="KEGG" id="ddi:DDB_G0287861"/>
<dbReference type="dictyBase" id="DDB_G0287861">
    <property type="gene designation" value="gcvH5"/>
</dbReference>
<dbReference type="VEuPathDB" id="AmoebaDB:DDB_G0287861"/>
<dbReference type="eggNOG" id="KOG3373">
    <property type="taxonomic scope" value="Eukaryota"/>
</dbReference>
<dbReference type="HOGENOM" id="CLU_1630090_0_0_1"/>
<dbReference type="InParanoid" id="Q54JU0"/>
<dbReference type="PhylomeDB" id="Q54JU0"/>
<dbReference type="PRO" id="PR:Q54JU0"/>
<dbReference type="Proteomes" id="UP000002195">
    <property type="component" value="Chromosome 5"/>
</dbReference>
<dbReference type="GO" id="GO:0005960">
    <property type="term" value="C:glycine cleavage complex"/>
    <property type="evidence" value="ECO:0000318"/>
    <property type="project" value="GO_Central"/>
</dbReference>
<dbReference type="GO" id="GO:0005739">
    <property type="term" value="C:mitochondrion"/>
    <property type="evidence" value="ECO:0000318"/>
    <property type="project" value="GO_Central"/>
</dbReference>
<dbReference type="GO" id="GO:0019464">
    <property type="term" value="P:glycine decarboxylation via glycine cleavage system"/>
    <property type="evidence" value="ECO:0000318"/>
    <property type="project" value="GO_Central"/>
</dbReference>
<dbReference type="CDD" id="cd06848">
    <property type="entry name" value="GCS_H"/>
    <property type="match status" value="1"/>
</dbReference>
<dbReference type="Gene3D" id="2.40.50.100">
    <property type="match status" value="1"/>
</dbReference>
<dbReference type="InterPro" id="IPR000089">
    <property type="entry name" value="Biotin_lipoyl"/>
</dbReference>
<dbReference type="InterPro" id="IPR002930">
    <property type="entry name" value="GCV_H"/>
</dbReference>
<dbReference type="InterPro" id="IPR033753">
    <property type="entry name" value="GCV_H/Fam206"/>
</dbReference>
<dbReference type="InterPro" id="IPR011053">
    <property type="entry name" value="Single_hybrid_motif"/>
</dbReference>
<dbReference type="PANTHER" id="PTHR11715">
    <property type="entry name" value="GLYCINE CLEAVAGE SYSTEM H PROTEIN"/>
    <property type="match status" value="1"/>
</dbReference>
<dbReference type="PANTHER" id="PTHR11715:SF3">
    <property type="entry name" value="GLYCINE CLEAVAGE SYSTEM H PROTEIN-RELATED"/>
    <property type="match status" value="1"/>
</dbReference>
<dbReference type="Pfam" id="PF01597">
    <property type="entry name" value="GCV_H"/>
    <property type="match status" value="1"/>
</dbReference>
<dbReference type="SUPFAM" id="SSF51230">
    <property type="entry name" value="Single hybrid motif"/>
    <property type="match status" value="1"/>
</dbReference>
<dbReference type="PROSITE" id="PS50968">
    <property type="entry name" value="BIOTINYL_LIPOYL"/>
    <property type="match status" value="1"/>
</dbReference>
<accession>Q54JU0</accession>
<evidence type="ECO:0000255" key="1"/>
<evidence type="ECO:0000255" key="2">
    <source>
        <dbReference type="PROSITE-ProRule" id="PRU01066"/>
    </source>
</evidence>
<evidence type="ECO:0000305" key="3"/>
<comment type="subcellular location">
    <subcellularLocation>
        <location evidence="3">Mitochondrion</location>
    </subcellularLocation>
</comment>
<comment type="similarity">
    <text evidence="3">Belongs to the GcvH family.</text>
</comment>
<comment type="caution">
    <text evidence="3">Ser-94 is present instead of the conserved Lys which is expected to bind the lipoyl cofactor.</text>
</comment>
<name>GCSH5_DICDI</name>
<feature type="transit peptide" description="Mitochondrion" evidence="1">
    <location>
        <begin position="1"/>
        <end position="23"/>
    </location>
</feature>
<feature type="chain" id="PRO_0000328551" description="Glycine cleavage system H-like protein gcvH5, mitochondrial">
    <location>
        <begin position="24"/>
        <end position="163"/>
    </location>
</feature>
<feature type="domain" description="Lipoyl-binding" evidence="2">
    <location>
        <begin position="50"/>
        <end position="136"/>
    </location>
</feature>
<sequence length="163" mass="18922">MFLFKTTNNLRKSLSNKFFCTRYSKNHLWISINNNNNSNNNNNNNNNIIIGTLGLTENGPINKFDDVLYIKFPIIKDENQVDDEPLTISLDTISDQILLNSPIRNCKLISINQDVLDYPNYINSSPMSKGWLCKIKFSNINDFNSLMNKNEYDNYCKNKIIKI</sequence>
<reference key="1">
    <citation type="journal article" date="2005" name="Nature">
        <title>The genome of the social amoeba Dictyostelium discoideum.</title>
        <authorList>
            <person name="Eichinger L."/>
            <person name="Pachebat J.A."/>
            <person name="Gloeckner G."/>
            <person name="Rajandream M.A."/>
            <person name="Sucgang R."/>
            <person name="Berriman M."/>
            <person name="Song J."/>
            <person name="Olsen R."/>
            <person name="Szafranski K."/>
            <person name="Xu Q."/>
            <person name="Tunggal B."/>
            <person name="Kummerfeld S."/>
            <person name="Madera M."/>
            <person name="Konfortov B.A."/>
            <person name="Rivero F."/>
            <person name="Bankier A.T."/>
            <person name="Lehmann R."/>
            <person name="Hamlin N."/>
            <person name="Davies R."/>
            <person name="Gaudet P."/>
            <person name="Fey P."/>
            <person name="Pilcher K."/>
            <person name="Chen G."/>
            <person name="Saunders D."/>
            <person name="Sodergren E.J."/>
            <person name="Davis P."/>
            <person name="Kerhornou A."/>
            <person name="Nie X."/>
            <person name="Hall N."/>
            <person name="Anjard C."/>
            <person name="Hemphill L."/>
            <person name="Bason N."/>
            <person name="Farbrother P."/>
            <person name="Desany B."/>
            <person name="Just E."/>
            <person name="Morio T."/>
            <person name="Rost R."/>
            <person name="Churcher C.M."/>
            <person name="Cooper J."/>
            <person name="Haydock S."/>
            <person name="van Driessche N."/>
            <person name="Cronin A."/>
            <person name="Goodhead I."/>
            <person name="Muzny D.M."/>
            <person name="Mourier T."/>
            <person name="Pain A."/>
            <person name="Lu M."/>
            <person name="Harper D."/>
            <person name="Lindsay R."/>
            <person name="Hauser H."/>
            <person name="James K.D."/>
            <person name="Quiles M."/>
            <person name="Madan Babu M."/>
            <person name="Saito T."/>
            <person name="Buchrieser C."/>
            <person name="Wardroper A."/>
            <person name="Felder M."/>
            <person name="Thangavelu M."/>
            <person name="Johnson D."/>
            <person name="Knights A."/>
            <person name="Loulseged H."/>
            <person name="Mungall K.L."/>
            <person name="Oliver K."/>
            <person name="Price C."/>
            <person name="Quail M.A."/>
            <person name="Urushihara H."/>
            <person name="Hernandez J."/>
            <person name="Rabbinowitsch E."/>
            <person name="Steffen D."/>
            <person name="Sanders M."/>
            <person name="Ma J."/>
            <person name="Kohara Y."/>
            <person name="Sharp S."/>
            <person name="Simmonds M.N."/>
            <person name="Spiegler S."/>
            <person name="Tivey A."/>
            <person name="Sugano S."/>
            <person name="White B."/>
            <person name="Walker D."/>
            <person name="Woodward J.R."/>
            <person name="Winckler T."/>
            <person name="Tanaka Y."/>
            <person name="Shaulsky G."/>
            <person name="Schleicher M."/>
            <person name="Weinstock G.M."/>
            <person name="Rosenthal A."/>
            <person name="Cox E.C."/>
            <person name="Chisholm R.L."/>
            <person name="Gibbs R.A."/>
            <person name="Loomis W.F."/>
            <person name="Platzer M."/>
            <person name="Kay R.R."/>
            <person name="Williams J.G."/>
            <person name="Dear P.H."/>
            <person name="Noegel A.A."/>
            <person name="Barrell B.G."/>
            <person name="Kuspa A."/>
        </authorList>
    </citation>
    <scope>NUCLEOTIDE SEQUENCE [LARGE SCALE GENOMIC DNA]</scope>
    <source>
        <strain>AX4</strain>
    </source>
</reference>
<proteinExistence type="inferred from homology"/>
<protein>
    <recommendedName>
        <fullName>Glycine cleavage system H-like protein gcvH5, mitochondrial</fullName>
    </recommendedName>
</protein>